<feature type="chain" id="PRO_1000116660" description="Holliday junction branch migration complex subunit RuvB">
    <location>
        <begin position="1"/>
        <end position="332"/>
    </location>
</feature>
<feature type="region of interest" description="Large ATPase domain (RuvB-L)" evidence="1">
    <location>
        <begin position="1"/>
        <end position="181"/>
    </location>
</feature>
<feature type="region of interest" description="Small ATPAse domain (RuvB-S)" evidence="1">
    <location>
        <begin position="182"/>
        <end position="252"/>
    </location>
</feature>
<feature type="region of interest" description="Head domain (RuvB-H)" evidence="1">
    <location>
        <begin position="255"/>
        <end position="332"/>
    </location>
</feature>
<feature type="binding site" evidence="1">
    <location>
        <position position="20"/>
    </location>
    <ligand>
        <name>ATP</name>
        <dbReference type="ChEBI" id="CHEBI:30616"/>
    </ligand>
</feature>
<feature type="binding site" evidence="1">
    <location>
        <position position="21"/>
    </location>
    <ligand>
        <name>ATP</name>
        <dbReference type="ChEBI" id="CHEBI:30616"/>
    </ligand>
</feature>
<feature type="binding site" evidence="1">
    <location>
        <position position="62"/>
    </location>
    <ligand>
        <name>ATP</name>
        <dbReference type="ChEBI" id="CHEBI:30616"/>
    </ligand>
</feature>
<feature type="binding site" evidence="1">
    <location>
        <position position="65"/>
    </location>
    <ligand>
        <name>ATP</name>
        <dbReference type="ChEBI" id="CHEBI:30616"/>
    </ligand>
</feature>
<feature type="binding site" evidence="1">
    <location>
        <position position="66"/>
    </location>
    <ligand>
        <name>ATP</name>
        <dbReference type="ChEBI" id="CHEBI:30616"/>
    </ligand>
</feature>
<feature type="binding site" evidence="1">
    <location>
        <position position="66"/>
    </location>
    <ligand>
        <name>Mg(2+)</name>
        <dbReference type="ChEBI" id="CHEBI:18420"/>
    </ligand>
</feature>
<feature type="binding site" evidence="1">
    <location>
        <position position="67"/>
    </location>
    <ligand>
        <name>ATP</name>
        <dbReference type="ChEBI" id="CHEBI:30616"/>
    </ligand>
</feature>
<feature type="binding site" evidence="1">
    <location>
        <begin position="128"/>
        <end position="130"/>
    </location>
    <ligand>
        <name>ATP</name>
        <dbReference type="ChEBI" id="CHEBI:30616"/>
    </ligand>
</feature>
<feature type="binding site" evidence="1">
    <location>
        <position position="171"/>
    </location>
    <ligand>
        <name>ATP</name>
        <dbReference type="ChEBI" id="CHEBI:30616"/>
    </ligand>
</feature>
<feature type="binding site" evidence="1">
    <location>
        <position position="181"/>
    </location>
    <ligand>
        <name>ATP</name>
        <dbReference type="ChEBI" id="CHEBI:30616"/>
    </ligand>
</feature>
<feature type="binding site" evidence="1">
    <location>
        <position position="218"/>
    </location>
    <ligand>
        <name>ATP</name>
        <dbReference type="ChEBI" id="CHEBI:30616"/>
    </ligand>
</feature>
<feature type="binding site" evidence="1">
    <location>
        <position position="291"/>
    </location>
    <ligand>
        <name>DNA</name>
        <dbReference type="ChEBI" id="CHEBI:16991"/>
    </ligand>
</feature>
<feature type="binding site" evidence="1">
    <location>
        <position position="310"/>
    </location>
    <ligand>
        <name>DNA</name>
        <dbReference type="ChEBI" id="CHEBI:16991"/>
    </ligand>
</feature>
<feature type="binding site" evidence="1">
    <location>
        <position position="312"/>
    </location>
    <ligand>
        <name>DNA</name>
        <dbReference type="ChEBI" id="CHEBI:16991"/>
    </ligand>
</feature>
<feature type="binding site" evidence="1">
    <location>
        <position position="315"/>
    </location>
    <ligand>
        <name>DNA</name>
        <dbReference type="ChEBI" id="CHEBI:16991"/>
    </ligand>
</feature>
<keyword id="KW-0067">ATP-binding</keyword>
<keyword id="KW-0963">Cytoplasm</keyword>
<keyword id="KW-0227">DNA damage</keyword>
<keyword id="KW-0233">DNA recombination</keyword>
<keyword id="KW-0234">DNA repair</keyword>
<keyword id="KW-0238">DNA-binding</keyword>
<keyword id="KW-0378">Hydrolase</keyword>
<keyword id="KW-0547">Nucleotide-binding</keyword>
<evidence type="ECO:0000255" key="1">
    <source>
        <dbReference type="HAMAP-Rule" id="MF_00016"/>
    </source>
</evidence>
<gene>
    <name evidence="1" type="primary">ruvB</name>
    <name type="ordered locus">SPJ_0269</name>
</gene>
<reference key="1">
    <citation type="journal article" date="2010" name="Genome Biol.">
        <title>Structure and dynamics of the pan-genome of Streptococcus pneumoniae and closely related species.</title>
        <authorList>
            <person name="Donati C."/>
            <person name="Hiller N.L."/>
            <person name="Tettelin H."/>
            <person name="Muzzi A."/>
            <person name="Croucher N.J."/>
            <person name="Angiuoli S.V."/>
            <person name="Oggioni M."/>
            <person name="Dunning Hotopp J.C."/>
            <person name="Hu F.Z."/>
            <person name="Riley D.R."/>
            <person name="Covacci A."/>
            <person name="Mitchell T.J."/>
            <person name="Bentley S.D."/>
            <person name="Kilian M."/>
            <person name="Ehrlich G.D."/>
            <person name="Rappuoli R."/>
            <person name="Moxon E.R."/>
            <person name="Masignani V."/>
        </authorList>
    </citation>
    <scope>NUCLEOTIDE SEQUENCE [LARGE SCALE GENOMIC DNA]</scope>
    <source>
        <strain>JJA</strain>
    </source>
</reference>
<name>RUVB_STRZJ</name>
<proteinExistence type="inferred from homology"/>
<dbReference type="EC" id="3.6.4.-" evidence="1"/>
<dbReference type="EMBL" id="CP000919">
    <property type="protein sequence ID" value="ACO19685.1"/>
    <property type="molecule type" value="Genomic_DNA"/>
</dbReference>
<dbReference type="RefSeq" id="WP_001860761.1">
    <property type="nucleotide sequence ID" value="NC_012466.1"/>
</dbReference>
<dbReference type="SMR" id="C1CC50"/>
<dbReference type="KEGG" id="sjj:SPJ_0269"/>
<dbReference type="HOGENOM" id="CLU_055599_1_0_9"/>
<dbReference type="Proteomes" id="UP000002206">
    <property type="component" value="Chromosome"/>
</dbReference>
<dbReference type="GO" id="GO:0005737">
    <property type="term" value="C:cytoplasm"/>
    <property type="evidence" value="ECO:0007669"/>
    <property type="project" value="UniProtKB-SubCell"/>
</dbReference>
<dbReference type="GO" id="GO:0048476">
    <property type="term" value="C:Holliday junction resolvase complex"/>
    <property type="evidence" value="ECO:0007669"/>
    <property type="project" value="UniProtKB-UniRule"/>
</dbReference>
<dbReference type="GO" id="GO:0005524">
    <property type="term" value="F:ATP binding"/>
    <property type="evidence" value="ECO:0007669"/>
    <property type="project" value="UniProtKB-UniRule"/>
</dbReference>
<dbReference type="GO" id="GO:0016887">
    <property type="term" value="F:ATP hydrolysis activity"/>
    <property type="evidence" value="ECO:0007669"/>
    <property type="project" value="InterPro"/>
</dbReference>
<dbReference type="GO" id="GO:0000400">
    <property type="term" value="F:four-way junction DNA binding"/>
    <property type="evidence" value="ECO:0007669"/>
    <property type="project" value="UniProtKB-UniRule"/>
</dbReference>
<dbReference type="GO" id="GO:0009378">
    <property type="term" value="F:four-way junction helicase activity"/>
    <property type="evidence" value="ECO:0007669"/>
    <property type="project" value="InterPro"/>
</dbReference>
<dbReference type="GO" id="GO:0006310">
    <property type="term" value="P:DNA recombination"/>
    <property type="evidence" value="ECO:0007669"/>
    <property type="project" value="UniProtKB-UniRule"/>
</dbReference>
<dbReference type="GO" id="GO:0006281">
    <property type="term" value="P:DNA repair"/>
    <property type="evidence" value="ECO:0007669"/>
    <property type="project" value="UniProtKB-UniRule"/>
</dbReference>
<dbReference type="CDD" id="cd00009">
    <property type="entry name" value="AAA"/>
    <property type="match status" value="1"/>
</dbReference>
<dbReference type="Gene3D" id="1.10.8.60">
    <property type="match status" value="1"/>
</dbReference>
<dbReference type="Gene3D" id="3.40.50.300">
    <property type="entry name" value="P-loop containing nucleotide triphosphate hydrolases"/>
    <property type="match status" value="1"/>
</dbReference>
<dbReference type="Gene3D" id="1.10.10.10">
    <property type="entry name" value="Winged helix-like DNA-binding domain superfamily/Winged helix DNA-binding domain"/>
    <property type="match status" value="1"/>
</dbReference>
<dbReference type="HAMAP" id="MF_00016">
    <property type="entry name" value="DNA_HJ_migration_RuvB"/>
    <property type="match status" value="1"/>
</dbReference>
<dbReference type="InterPro" id="IPR003593">
    <property type="entry name" value="AAA+_ATPase"/>
</dbReference>
<dbReference type="InterPro" id="IPR041445">
    <property type="entry name" value="AAA_lid_4"/>
</dbReference>
<dbReference type="InterPro" id="IPR004605">
    <property type="entry name" value="DNA_helicase_Holl-junc_RuvB"/>
</dbReference>
<dbReference type="InterPro" id="IPR027417">
    <property type="entry name" value="P-loop_NTPase"/>
</dbReference>
<dbReference type="InterPro" id="IPR008824">
    <property type="entry name" value="RuvB-like_N"/>
</dbReference>
<dbReference type="InterPro" id="IPR008823">
    <property type="entry name" value="RuvB_C"/>
</dbReference>
<dbReference type="InterPro" id="IPR036388">
    <property type="entry name" value="WH-like_DNA-bd_sf"/>
</dbReference>
<dbReference type="InterPro" id="IPR036390">
    <property type="entry name" value="WH_DNA-bd_sf"/>
</dbReference>
<dbReference type="NCBIfam" id="NF000868">
    <property type="entry name" value="PRK00080.1"/>
    <property type="match status" value="1"/>
</dbReference>
<dbReference type="NCBIfam" id="TIGR00635">
    <property type="entry name" value="ruvB"/>
    <property type="match status" value="1"/>
</dbReference>
<dbReference type="PANTHER" id="PTHR42848">
    <property type="match status" value="1"/>
</dbReference>
<dbReference type="PANTHER" id="PTHR42848:SF1">
    <property type="entry name" value="HOLLIDAY JUNCTION BRANCH MIGRATION COMPLEX SUBUNIT RUVB"/>
    <property type="match status" value="1"/>
</dbReference>
<dbReference type="Pfam" id="PF17864">
    <property type="entry name" value="AAA_lid_4"/>
    <property type="match status" value="1"/>
</dbReference>
<dbReference type="Pfam" id="PF05491">
    <property type="entry name" value="RuvB_C"/>
    <property type="match status" value="1"/>
</dbReference>
<dbReference type="Pfam" id="PF05496">
    <property type="entry name" value="RuvB_N"/>
    <property type="match status" value="1"/>
</dbReference>
<dbReference type="SMART" id="SM00382">
    <property type="entry name" value="AAA"/>
    <property type="match status" value="1"/>
</dbReference>
<dbReference type="SUPFAM" id="SSF52540">
    <property type="entry name" value="P-loop containing nucleoside triphosphate hydrolases"/>
    <property type="match status" value="1"/>
</dbReference>
<dbReference type="SUPFAM" id="SSF46785">
    <property type="entry name" value="Winged helix' DNA-binding domain"/>
    <property type="match status" value="1"/>
</dbReference>
<comment type="function">
    <text evidence="1">The RuvA-RuvB-RuvC complex processes Holliday junction (HJ) DNA during genetic recombination and DNA repair, while the RuvA-RuvB complex plays an important role in the rescue of blocked DNA replication forks via replication fork reversal (RFR). RuvA specifically binds to HJ cruciform DNA, conferring on it an open structure. The RuvB hexamer acts as an ATP-dependent pump, pulling dsDNA into and through the RuvAB complex. RuvB forms 2 homohexamers on either side of HJ DNA bound by 1 or 2 RuvA tetramers; 4 subunits per hexamer contact DNA at a time. Coordinated motions by a converter formed by DNA-disengaged RuvB subunits stimulates ATP hydrolysis and nucleotide exchange. Immobilization of the converter enables RuvB to convert the ATP-contained energy into a lever motion, pulling 2 nucleotides of DNA out of the RuvA tetramer per ATP hydrolyzed, thus driving DNA branch migration. The RuvB motors rotate together with the DNA substrate, which together with the progressing nucleotide cycle form the mechanistic basis for DNA recombination by continuous HJ branch migration. Branch migration allows RuvC to scan DNA until it finds its consensus sequence, where it cleaves and resolves cruciform DNA.</text>
</comment>
<comment type="catalytic activity">
    <reaction evidence="1">
        <text>ATP + H2O = ADP + phosphate + H(+)</text>
        <dbReference type="Rhea" id="RHEA:13065"/>
        <dbReference type="ChEBI" id="CHEBI:15377"/>
        <dbReference type="ChEBI" id="CHEBI:15378"/>
        <dbReference type="ChEBI" id="CHEBI:30616"/>
        <dbReference type="ChEBI" id="CHEBI:43474"/>
        <dbReference type="ChEBI" id="CHEBI:456216"/>
    </reaction>
</comment>
<comment type="subunit">
    <text evidence="1">Homohexamer. Forms an RuvA(8)-RuvB(12)-Holliday junction (HJ) complex. HJ DNA is sandwiched between 2 RuvA tetramers; dsDNA enters through RuvA and exits via RuvB. An RuvB hexamer assembles on each DNA strand where it exits the tetramer. Each RuvB hexamer is contacted by two RuvA subunits (via domain III) on 2 adjacent RuvB subunits; this complex drives branch migration. In the full resolvosome a probable DNA-RuvA(4)-RuvB(12)-RuvC(2) complex forms which resolves the HJ.</text>
</comment>
<comment type="subcellular location">
    <subcellularLocation>
        <location evidence="1">Cytoplasm</location>
    </subcellularLocation>
</comment>
<comment type="domain">
    <text evidence="1">Has 3 domains, the large (RuvB-L) and small ATPase (RuvB-S) domains and the C-terminal head (RuvB-H) domain. The head domain binds DNA, while the ATPase domains jointly bind ATP, ADP or are empty depending on the state of the subunit in the translocation cycle. During a single DNA translocation step the structure of each domain remains the same, but their relative positions change.</text>
</comment>
<comment type="similarity">
    <text evidence="1">Belongs to the RuvB family.</text>
</comment>
<protein>
    <recommendedName>
        <fullName evidence="1">Holliday junction branch migration complex subunit RuvB</fullName>
        <ecNumber evidence="1">3.6.4.-</ecNumber>
    </recommendedName>
</protein>
<organism>
    <name type="scientific">Streptococcus pneumoniae (strain JJA)</name>
    <dbReference type="NCBI Taxonomy" id="488222"/>
    <lineage>
        <taxon>Bacteria</taxon>
        <taxon>Bacillati</taxon>
        <taxon>Bacillota</taxon>
        <taxon>Bacilli</taxon>
        <taxon>Lactobacillales</taxon>
        <taxon>Streptococcaceae</taxon>
        <taxon>Streptococcus</taxon>
    </lineage>
</organism>
<sequence>MSRILDNEIMGDEELVERTLRPQYLREYIGQDKVKDQLQIFIEAAKMRDEALDHVLLFGPPGLGKTTMAFVIANELGVNLKQTSGPVIEKAGDLVAILNELEPGDVLFIDEIHRLPMSVEEVLYSAMEDFYIDIMIGAGEGSRSVHLELPPFTLIGATTRAGMLSNPLRARFGITGHMEYYAHAGLTEIVERTADIFEMEITHEAASELALRSRGTPRIANRLLKRVRDFAQIMGNGVIDDIITDKALTMLDVDHEGLDYVDQKILRTMIEMYSGGPVGLGTLSVNIAEERETVEDMYEPYLIQKGFIMRTRSGRVATAKAYEHLGYEYSEK</sequence>
<accession>C1CC50</accession>